<organism>
    <name type="scientific">Acanthamoeba polyphaga mimivirus</name>
    <name type="common">APMV</name>
    <dbReference type="NCBI Taxonomy" id="212035"/>
    <lineage>
        <taxon>Viruses</taxon>
        <taxon>Varidnaviria</taxon>
        <taxon>Bamfordvirae</taxon>
        <taxon>Nucleocytoviricota</taxon>
        <taxon>Megaviricetes</taxon>
        <taxon>Imitervirales</taxon>
        <taxon>Mimiviridae</taxon>
        <taxon>Megamimivirinae</taxon>
        <taxon>Mimivirus</taxon>
        <taxon>Mimivirus bradfordmassiliense</taxon>
    </lineage>
</organism>
<evidence type="ECO:0000269" key="1">
    <source>
    </source>
</evidence>
<evidence type="ECO:0000305" key="2"/>
<comment type="subcellular location">
    <subcellularLocation>
        <location evidence="1">Virion</location>
    </subcellularLocation>
</comment>
<comment type="similarity">
    <text evidence="2">Belongs to the mimivirus L515/L516 family.</text>
</comment>
<gene>
    <name type="ordered locus">MIMI_L515</name>
</gene>
<organismHost>
    <name type="scientific">Acanthamoeba polyphaga</name>
    <name type="common">Amoeba</name>
    <dbReference type="NCBI Taxonomy" id="5757"/>
</organismHost>
<dbReference type="EMBL" id="AY653733">
    <property type="protein sequence ID" value="AAV50779.1"/>
    <property type="molecule type" value="Genomic_DNA"/>
</dbReference>
<dbReference type="SMR" id="Q5UQ80"/>
<dbReference type="KEGG" id="vg:9925147"/>
<dbReference type="OrthoDB" id="3721at10239"/>
<dbReference type="Proteomes" id="UP000001134">
    <property type="component" value="Genome"/>
</dbReference>
<dbReference type="GO" id="GO:0044423">
    <property type="term" value="C:virion component"/>
    <property type="evidence" value="ECO:0007669"/>
    <property type="project" value="UniProtKB-KW"/>
</dbReference>
<dbReference type="InterPro" id="IPR043881">
    <property type="entry name" value="DUF5851"/>
</dbReference>
<dbReference type="Pfam" id="PF19169">
    <property type="entry name" value="DUF5851"/>
    <property type="match status" value="1"/>
</dbReference>
<sequence>MNPTNLNFGKILKQVEMVDVNEDSLDLKFPKRTIVDISTDTFIKIIFEKDDNYYLFLNYVNALDLYLNYYTNINLVSSNKQLLNQDEHIDVYFKGGNVMNYHFRTMVSDPRLKELFSAYFKKSDFDFSVSIHTDTDNRFNQLKTYVYPKIIDYLITTSNLFNEYLQEIINGDINKSTIKIDPKFLHNFKQDNADLKYYTIRDTIKDIIGLPRFNFVKEIIDNTRNTNTKNFMHIRQIDNIGRYIRVKFHDNSIIQFIPSDKSFYELKYTPYIINNFNQVIDYYNEYVLNGLIPVYHNFYENSKYHACLLYPYYKYLVEPIGQHEMEYSDLIDKIIKYNFSLLEKSEFYTKEKINSMLQQISTSLNELKDTYYEKNSDNPPDKTEVTNSNAFIRYTVNKNRSDNPHIELAPTNNFLVYNDFEKSDPLSIINFDDNQTIKTTNNVHYVSGNMLIKNILGNRQILDFDLFRIKFNLVAVNYIFENEKLLREFKIPSEFIDVSVTIIDSNVYNEDHQTFIMPIKLDNTIIPDIPVKSHSYTYFIGDLIRILFTDFNFFPWMKGKYEKRIKRLLLLLYLYDQQHQTNYLDTLYNMATNIKYNLTNPNKTQKNMDKYALSKVHLNSYKDYSNLFDLVYIDNKYGPIKEPMKMLLIVSEILDKNNALDIINHFRKYLKLAPLTNISNLKTEFGKFLDEIISTYNDINPQNIQAKSSINTLVSRNNYSMIKNNRRNY</sequence>
<feature type="chain" id="PRO_0000243968" description="Uncharacterized protein L515">
    <location>
        <begin position="1"/>
        <end position="729"/>
    </location>
</feature>
<reference key="1">
    <citation type="journal article" date="2004" name="Science">
        <title>The 1.2-megabase genome sequence of Mimivirus.</title>
        <authorList>
            <person name="Raoult D."/>
            <person name="Audic S."/>
            <person name="Robert C."/>
            <person name="Abergel C."/>
            <person name="Renesto P."/>
            <person name="Ogata H."/>
            <person name="La Scola B."/>
            <person name="Susan M."/>
            <person name="Claverie J.-M."/>
        </authorList>
    </citation>
    <scope>NUCLEOTIDE SEQUENCE [LARGE SCALE GENOMIC DNA]</scope>
    <source>
        <strain>Rowbotham-Bradford</strain>
    </source>
</reference>
<reference key="2">
    <citation type="journal article" date="2006" name="J. Virol.">
        <title>Mimivirus giant particles incorporate a large fraction of anonymous and unique gene products.</title>
        <authorList>
            <person name="Renesto P."/>
            <person name="Abergel C."/>
            <person name="Decloquement P."/>
            <person name="Moinier D."/>
            <person name="Azza S."/>
            <person name="Ogata H."/>
            <person name="Fourquet P."/>
            <person name="Gorvel J.-P."/>
            <person name="Claverie J.-M."/>
            <person name="Raoult D."/>
        </authorList>
    </citation>
    <scope>IDENTIFICATION BY MASS SPECTROMETRY [LARGE SCALE ANALYSIS]</scope>
    <scope>SUBCELLULAR LOCATION</scope>
</reference>
<name>YL515_MIMIV</name>
<keyword id="KW-1185">Reference proteome</keyword>
<keyword id="KW-0946">Virion</keyword>
<proteinExistence type="evidence at protein level"/>
<protein>
    <recommendedName>
        <fullName>Uncharacterized protein L515</fullName>
    </recommendedName>
</protein>
<accession>Q5UQ80</accession>